<reference key="1">
    <citation type="journal article" date="1999" name="Nature">
        <title>Evidence for lateral gene transfer between Archaea and Bacteria from genome sequence of Thermotoga maritima.</title>
        <authorList>
            <person name="Nelson K.E."/>
            <person name="Clayton R.A."/>
            <person name="Gill S.R."/>
            <person name="Gwinn M.L."/>
            <person name="Dodson R.J."/>
            <person name="Haft D.H."/>
            <person name="Hickey E.K."/>
            <person name="Peterson J.D."/>
            <person name="Nelson W.C."/>
            <person name="Ketchum K.A."/>
            <person name="McDonald L.A."/>
            <person name="Utterback T.R."/>
            <person name="Malek J.A."/>
            <person name="Linher K.D."/>
            <person name="Garrett M.M."/>
            <person name="Stewart A.M."/>
            <person name="Cotton M.D."/>
            <person name="Pratt M.S."/>
            <person name="Phillips C.A."/>
            <person name="Richardson D.L."/>
            <person name="Heidelberg J.F."/>
            <person name="Sutton G.G."/>
            <person name="Fleischmann R.D."/>
            <person name="Eisen J.A."/>
            <person name="White O."/>
            <person name="Salzberg S.L."/>
            <person name="Smith H.O."/>
            <person name="Venter J.C."/>
            <person name="Fraser C.M."/>
        </authorList>
    </citation>
    <scope>NUCLEOTIDE SEQUENCE [LARGE SCALE GENOMIC DNA]</scope>
    <source>
        <strain>ATCC 43589 / DSM 3109 / JCM 10099 / NBRC 100826 / MSB8</strain>
    </source>
</reference>
<name>MIAA_THEMA</name>
<sequence>MKIAIVGGPTAVGKTDIMIEVCEEIGAEIISMDSRQIYRYMDIGTAKPTPEQRKRVLHHMIDIIDPDEYYNAFMYRKDSLRAMEDVLRRGKIPVYVGGTGLYADALVRGIFEGVPADENIRKELRELERREPGILRKMLEELDPEAATRIHPNDLKRTIRALEVYMKTGRRISELQKEAKGDDRFFIIVLTRERYELYERINKRVDKMIEMGLVDEVKRLLGMGYSKDLNSMKTIGYKEVIDYLEGKYDFDKMVHLIKRNTRHFARRQIIWFKRYKEAVWYNLTFEDVGEVKEKLKKLIVENFSV</sequence>
<gene>
    <name evidence="1" type="primary">miaA</name>
    <name type="ordered locus">TM_0525</name>
</gene>
<feature type="chain" id="PRO_0000163997" description="tRNA dimethylallyltransferase">
    <location>
        <begin position="1"/>
        <end position="305"/>
    </location>
</feature>
<feature type="region of interest" description="Interaction with substrate tRNA" evidence="1">
    <location>
        <begin position="33"/>
        <end position="36"/>
    </location>
</feature>
<feature type="binding site" evidence="1">
    <location>
        <begin position="8"/>
        <end position="15"/>
    </location>
    <ligand>
        <name>ATP</name>
        <dbReference type="ChEBI" id="CHEBI:30616"/>
    </ligand>
</feature>
<feature type="binding site" evidence="1">
    <location>
        <begin position="10"/>
        <end position="15"/>
    </location>
    <ligand>
        <name>substrate</name>
    </ligand>
</feature>
<feature type="site" description="Interaction with substrate tRNA" evidence="1">
    <location>
        <position position="99"/>
    </location>
</feature>
<feature type="site" description="Interaction with substrate tRNA" evidence="1">
    <location>
        <position position="121"/>
    </location>
</feature>
<organism>
    <name type="scientific">Thermotoga maritima (strain ATCC 43589 / DSM 3109 / JCM 10099 / NBRC 100826 / MSB8)</name>
    <dbReference type="NCBI Taxonomy" id="243274"/>
    <lineage>
        <taxon>Bacteria</taxon>
        <taxon>Thermotogati</taxon>
        <taxon>Thermotogota</taxon>
        <taxon>Thermotogae</taxon>
        <taxon>Thermotogales</taxon>
        <taxon>Thermotogaceae</taxon>
        <taxon>Thermotoga</taxon>
    </lineage>
</organism>
<protein>
    <recommendedName>
        <fullName evidence="1">tRNA dimethylallyltransferase</fullName>
        <ecNumber evidence="1">2.5.1.75</ecNumber>
    </recommendedName>
    <alternativeName>
        <fullName evidence="1">Dimethylallyl diphosphate:tRNA dimethylallyltransferase</fullName>
        <shortName evidence="1">DMAPP:tRNA dimethylallyltransferase</shortName>
        <shortName evidence="1">DMATase</shortName>
    </alternativeName>
    <alternativeName>
        <fullName evidence="1">Isopentenyl-diphosphate:tRNA isopentenyltransferase</fullName>
        <shortName evidence="1">IPP transferase</shortName>
        <shortName evidence="1">IPPT</shortName>
        <shortName evidence="1">IPTase</shortName>
    </alternativeName>
</protein>
<keyword id="KW-0067">ATP-binding</keyword>
<keyword id="KW-0460">Magnesium</keyword>
<keyword id="KW-0547">Nucleotide-binding</keyword>
<keyword id="KW-1185">Reference proteome</keyword>
<keyword id="KW-0808">Transferase</keyword>
<keyword id="KW-0819">tRNA processing</keyword>
<evidence type="ECO:0000255" key="1">
    <source>
        <dbReference type="HAMAP-Rule" id="MF_00185"/>
    </source>
</evidence>
<proteinExistence type="inferred from homology"/>
<accession>Q9WYZ5</accession>
<comment type="function">
    <text evidence="1">Catalyzes the transfer of a dimethylallyl group onto the adenine at position 37 in tRNAs that read codons beginning with uridine, leading to the formation of N6-(dimethylallyl)adenosine (i(6)A).</text>
</comment>
<comment type="catalytic activity">
    <reaction evidence="1">
        <text>adenosine(37) in tRNA + dimethylallyl diphosphate = N(6)-dimethylallyladenosine(37) in tRNA + diphosphate</text>
        <dbReference type="Rhea" id="RHEA:26482"/>
        <dbReference type="Rhea" id="RHEA-COMP:10162"/>
        <dbReference type="Rhea" id="RHEA-COMP:10375"/>
        <dbReference type="ChEBI" id="CHEBI:33019"/>
        <dbReference type="ChEBI" id="CHEBI:57623"/>
        <dbReference type="ChEBI" id="CHEBI:74411"/>
        <dbReference type="ChEBI" id="CHEBI:74415"/>
        <dbReference type="EC" id="2.5.1.75"/>
    </reaction>
</comment>
<comment type="cofactor">
    <cofactor evidence="1">
        <name>Mg(2+)</name>
        <dbReference type="ChEBI" id="CHEBI:18420"/>
    </cofactor>
</comment>
<comment type="subunit">
    <text evidence="1">Monomer.</text>
</comment>
<comment type="similarity">
    <text evidence="1">Belongs to the IPP transferase family.</text>
</comment>
<dbReference type="EC" id="2.5.1.75" evidence="1"/>
<dbReference type="EMBL" id="AE000512">
    <property type="protein sequence ID" value="AAD35610.1"/>
    <property type="molecule type" value="Genomic_DNA"/>
</dbReference>
<dbReference type="PIR" id="C72366">
    <property type="entry name" value="C72366"/>
</dbReference>
<dbReference type="RefSeq" id="NP_228335.1">
    <property type="nucleotide sequence ID" value="NC_000853.1"/>
</dbReference>
<dbReference type="RefSeq" id="WP_004081395.1">
    <property type="nucleotide sequence ID" value="NC_000853.1"/>
</dbReference>
<dbReference type="SMR" id="Q9WYZ5"/>
<dbReference type="FunCoup" id="Q9WYZ5">
    <property type="interactions" value="372"/>
</dbReference>
<dbReference type="STRING" id="243274.TM_0525"/>
<dbReference type="PaxDb" id="243274-THEMA_02050"/>
<dbReference type="DNASU" id="897577"/>
<dbReference type="EnsemblBacteria" id="AAD35610">
    <property type="protein sequence ID" value="AAD35610"/>
    <property type="gene ID" value="TM_0525"/>
</dbReference>
<dbReference type="KEGG" id="tma:TM0525"/>
<dbReference type="KEGG" id="tmi:THEMA_02050"/>
<dbReference type="KEGG" id="tmm:Tmari_0522"/>
<dbReference type="KEGG" id="tmw:THMA_0538"/>
<dbReference type="eggNOG" id="COG0324">
    <property type="taxonomic scope" value="Bacteria"/>
</dbReference>
<dbReference type="InParanoid" id="Q9WYZ5"/>
<dbReference type="OrthoDB" id="9776390at2"/>
<dbReference type="Proteomes" id="UP000008183">
    <property type="component" value="Chromosome"/>
</dbReference>
<dbReference type="GO" id="GO:0005524">
    <property type="term" value="F:ATP binding"/>
    <property type="evidence" value="ECO:0007669"/>
    <property type="project" value="UniProtKB-UniRule"/>
</dbReference>
<dbReference type="GO" id="GO:0052381">
    <property type="term" value="F:tRNA dimethylallyltransferase activity"/>
    <property type="evidence" value="ECO:0000318"/>
    <property type="project" value="GO_Central"/>
</dbReference>
<dbReference type="GO" id="GO:0006400">
    <property type="term" value="P:tRNA modification"/>
    <property type="evidence" value="ECO:0000318"/>
    <property type="project" value="GO_Central"/>
</dbReference>
<dbReference type="FunFam" id="1.10.20.140:FF:000001">
    <property type="entry name" value="tRNA dimethylallyltransferase"/>
    <property type="match status" value="1"/>
</dbReference>
<dbReference type="Gene3D" id="1.10.20.140">
    <property type="match status" value="1"/>
</dbReference>
<dbReference type="Gene3D" id="3.40.50.300">
    <property type="entry name" value="P-loop containing nucleotide triphosphate hydrolases"/>
    <property type="match status" value="1"/>
</dbReference>
<dbReference type="HAMAP" id="MF_00185">
    <property type="entry name" value="IPP_trans"/>
    <property type="match status" value="1"/>
</dbReference>
<dbReference type="InterPro" id="IPR039657">
    <property type="entry name" value="Dimethylallyltransferase"/>
</dbReference>
<dbReference type="InterPro" id="IPR018022">
    <property type="entry name" value="IPT"/>
</dbReference>
<dbReference type="InterPro" id="IPR027417">
    <property type="entry name" value="P-loop_NTPase"/>
</dbReference>
<dbReference type="NCBIfam" id="TIGR00174">
    <property type="entry name" value="miaA"/>
    <property type="match status" value="1"/>
</dbReference>
<dbReference type="PANTHER" id="PTHR11088">
    <property type="entry name" value="TRNA DIMETHYLALLYLTRANSFERASE"/>
    <property type="match status" value="1"/>
</dbReference>
<dbReference type="PANTHER" id="PTHR11088:SF60">
    <property type="entry name" value="TRNA DIMETHYLALLYLTRANSFERASE"/>
    <property type="match status" value="1"/>
</dbReference>
<dbReference type="Pfam" id="PF01715">
    <property type="entry name" value="IPPT"/>
    <property type="match status" value="1"/>
</dbReference>
<dbReference type="SUPFAM" id="SSF52540">
    <property type="entry name" value="P-loop containing nucleoside triphosphate hydrolases"/>
    <property type="match status" value="1"/>
</dbReference>